<sequence>MNHCFLILFTLIVFTVVWSLEENEEYPDEDEMIESFMDGYSYRGDDGTCILKGDHCHGTCDCCGWTTTCRKSKSAGGKICKSEGSSISAFNAIAKGVAAMKKAKCKHKSG</sequence>
<feature type="signal peptide" evidence="1">
    <location>
        <begin position="1"/>
        <end position="19"/>
    </location>
</feature>
<feature type="propeptide" id="PRO_0000398546" evidence="2">
    <location>
        <begin position="20"/>
        <end position="43"/>
    </location>
</feature>
<feature type="peptide" id="PRO_0000398547" description="U32-theraphotoxin-Cg1a">
    <location>
        <begin position="44"/>
        <end position="110"/>
    </location>
</feature>
<feature type="disulfide bond" evidence="3">
    <location>
        <begin position="49"/>
        <end position="63"/>
    </location>
</feature>
<feature type="disulfide bond" evidence="3">
    <location>
        <begin position="56"/>
        <end position="69"/>
    </location>
</feature>
<feature type="disulfide bond" evidence="3">
    <location>
        <begin position="60"/>
        <end position="105"/>
    </location>
</feature>
<feature type="disulfide bond" evidence="3">
    <location>
        <begin position="62"/>
        <end position="80"/>
    </location>
</feature>
<name>TX32D_CHIGU</name>
<evidence type="ECO:0000255" key="1"/>
<evidence type="ECO:0000269" key="2">
    <source>
    </source>
</evidence>
<evidence type="ECO:0000305" key="3"/>
<accession>B1P1I5</accession>
<protein>
    <recommendedName>
        <fullName>U32-theraphotoxin-Cg1a</fullName>
        <shortName>U32-TRTX-Cg1a</shortName>
    </recommendedName>
    <alternativeName>
        <fullName>Jingzhaotoxin-66</fullName>
        <shortName>JZTX-66</shortName>
    </alternativeName>
    <alternativeName>
        <fullName>Peptide F8-12.07</fullName>
    </alternativeName>
</protein>
<proteinExistence type="evidence at protein level"/>
<keyword id="KW-0903">Direct protein sequencing</keyword>
<keyword id="KW-1015">Disulfide bond</keyword>
<keyword id="KW-0872">Ion channel impairing toxin</keyword>
<keyword id="KW-0960">Knottin</keyword>
<keyword id="KW-0964">Secreted</keyword>
<keyword id="KW-0732">Signal</keyword>
<keyword id="KW-0800">Toxin</keyword>
<comment type="function">
    <text>Probable ion channel inhibitor.</text>
</comment>
<comment type="subcellular location">
    <subcellularLocation>
        <location>Secreted</location>
    </subcellularLocation>
</comment>
<comment type="tissue specificity">
    <text>Expressed by the venom gland.</text>
</comment>
<comment type="domain">
    <text evidence="3">The presence of a 'disulfide through disulfide knot' structurally defines this protein as a knottin.</text>
</comment>
<comment type="similarity">
    <text evidence="3">Belongs to the neurotoxin 03 (Tx2) family. 02 subfamily.</text>
</comment>
<organism>
    <name type="scientific">Chilobrachys guangxiensis</name>
    <name type="common">Chinese earth tiger tarantula</name>
    <name type="synonym">Chilobrachys jingzhao</name>
    <dbReference type="NCBI Taxonomy" id="278060"/>
    <lineage>
        <taxon>Eukaryota</taxon>
        <taxon>Metazoa</taxon>
        <taxon>Ecdysozoa</taxon>
        <taxon>Arthropoda</taxon>
        <taxon>Chelicerata</taxon>
        <taxon>Arachnida</taxon>
        <taxon>Araneae</taxon>
        <taxon>Mygalomorphae</taxon>
        <taxon>Theraphosidae</taxon>
        <taxon>Chilobrachys</taxon>
    </lineage>
</organism>
<dbReference type="EMBL" id="EU233916">
    <property type="protein sequence ID" value="ABY71735.1"/>
    <property type="molecule type" value="mRNA"/>
</dbReference>
<dbReference type="ArachnoServer" id="AS000864">
    <property type="toxin name" value="U32-theraphotoxin-Cg1a"/>
</dbReference>
<dbReference type="GO" id="GO:0005576">
    <property type="term" value="C:extracellular region"/>
    <property type="evidence" value="ECO:0007669"/>
    <property type="project" value="UniProtKB-SubCell"/>
</dbReference>
<dbReference type="GO" id="GO:0099106">
    <property type="term" value="F:ion channel regulator activity"/>
    <property type="evidence" value="ECO:0007669"/>
    <property type="project" value="UniProtKB-KW"/>
</dbReference>
<dbReference type="GO" id="GO:0090729">
    <property type="term" value="F:toxin activity"/>
    <property type="evidence" value="ECO:0007669"/>
    <property type="project" value="UniProtKB-KW"/>
</dbReference>
<reference key="1">
    <citation type="journal article" date="2008" name="Cell. Mol. Life Sci.">
        <title>Molecular diversity and evolution of cystine knot toxins of the tarantula Chilobrachys jingzhao.</title>
        <authorList>
            <person name="Chen J."/>
            <person name="Deng M."/>
            <person name="He Q."/>
            <person name="Meng E."/>
            <person name="Jiang L."/>
            <person name="Liao Z."/>
            <person name="Rong M."/>
            <person name="Liang S."/>
        </authorList>
    </citation>
    <scope>NUCLEOTIDE SEQUENCE [LARGE SCALE MRNA]</scope>
    <source>
        <tissue>Venom gland</tissue>
    </source>
</reference>
<reference key="2">
    <citation type="journal article" date="2007" name="Proteomics">
        <title>Proteomic and peptidomic analysis of the venom from Chinese tarantula Chilobrachys jingzhao.</title>
        <authorList>
            <person name="Liao Z."/>
            <person name="Cao J."/>
            <person name="Li S."/>
            <person name="Yan X."/>
            <person name="Hu W."/>
            <person name="He Q."/>
            <person name="Chen J."/>
            <person name="Tang J."/>
            <person name="Xie J."/>
            <person name="Liang S."/>
        </authorList>
    </citation>
    <scope>PROTEIN SEQUENCE OF 44-55</scope>
    <scope>IDENTIFICATION BY MASS SPECTROMETRY</scope>
    <source>
        <tissue>Venom</tissue>
    </source>
</reference>